<comment type="function">
    <text evidence="1">Binds directly to 23S ribosomal RNA and is necessary for the in vitro assembly process of the 50S ribosomal subunit. It is not involved in the protein synthesizing functions of that subunit.</text>
</comment>
<comment type="similarity">
    <text evidence="1">Belongs to the bacterial ribosomal protein bL20 family.</text>
</comment>
<name>RL20_CLONN</name>
<organism>
    <name type="scientific">Clostridium novyi (strain NT)</name>
    <dbReference type="NCBI Taxonomy" id="386415"/>
    <lineage>
        <taxon>Bacteria</taxon>
        <taxon>Bacillati</taxon>
        <taxon>Bacillota</taxon>
        <taxon>Clostridia</taxon>
        <taxon>Eubacteriales</taxon>
        <taxon>Clostridiaceae</taxon>
        <taxon>Clostridium</taxon>
    </lineage>
</organism>
<protein>
    <recommendedName>
        <fullName evidence="1">Large ribosomal subunit protein bL20</fullName>
    </recommendedName>
    <alternativeName>
        <fullName evidence="2">50S ribosomal protein L20</fullName>
    </alternativeName>
</protein>
<proteinExistence type="inferred from homology"/>
<keyword id="KW-1185">Reference proteome</keyword>
<keyword id="KW-0687">Ribonucleoprotein</keyword>
<keyword id="KW-0689">Ribosomal protein</keyword>
<keyword id="KW-0694">RNA-binding</keyword>
<keyword id="KW-0699">rRNA-binding</keyword>
<accession>A0PZN4</accession>
<evidence type="ECO:0000255" key="1">
    <source>
        <dbReference type="HAMAP-Rule" id="MF_00382"/>
    </source>
</evidence>
<evidence type="ECO:0000305" key="2"/>
<feature type="chain" id="PRO_1000048961" description="Large ribosomal subunit protein bL20">
    <location>
        <begin position="1"/>
        <end position="119"/>
    </location>
</feature>
<sequence length="119" mass="13802">MARVKRAMHARKKHKKILKLAKGYYGRRSRTFKNANETVLRAMNFAYVGRKLKKRDFRRLWIARINAAARMNGLSYSKFMNGIKLAGINMNRKMLSEIAINDEKAFADLVEVAKKQLNA</sequence>
<gene>
    <name evidence="1" type="primary">rplT</name>
    <name type="ordered locus">NT01CX_1763</name>
</gene>
<dbReference type="EMBL" id="CP000382">
    <property type="protein sequence ID" value="ABK61263.1"/>
    <property type="molecule type" value="Genomic_DNA"/>
</dbReference>
<dbReference type="RefSeq" id="WP_011721841.1">
    <property type="nucleotide sequence ID" value="NC_008593.1"/>
</dbReference>
<dbReference type="SMR" id="A0PZN4"/>
<dbReference type="STRING" id="386415.NT01CX_1763"/>
<dbReference type="KEGG" id="cno:NT01CX_1763"/>
<dbReference type="eggNOG" id="COG0292">
    <property type="taxonomic scope" value="Bacteria"/>
</dbReference>
<dbReference type="HOGENOM" id="CLU_123265_0_1_9"/>
<dbReference type="Proteomes" id="UP000008220">
    <property type="component" value="Chromosome"/>
</dbReference>
<dbReference type="GO" id="GO:1990904">
    <property type="term" value="C:ribonucleoprotein complex"/>
    <property type="evidence" value="ECO:0007669"/>
    <property type="project" value="UniProtKB-KW"/>
</dbReference>
<dbReference type="GO" id="GO:0005840">
    <property type="term" value="C:ribosome"/>
    <property type="evidence" value="ECO:0007669"/>
    <property type="project" value="UniProtKB-KW"/>
</dbReference>
<dbReference type="GO" id="GO:0019843">
    <property type="term" value="F:rRNA binding"/>
    <property type="evidence" value="ECO:0007669"/>
    <property type="project" value="UniProtKB-UniRule"/>
</dbReference>
<dbReference type="GO" id="GO:0003735">
    <property type="term" value="F:structural constituent of ribosome"/>
    <property type="evidence" value="ECO:0007669"/>
    <property type="project" value="InterPro"/>
</dbReference>
<dbReference type="GO" id="GO:0000027">
    <property type="term" value="P:ribosomal large subunit assembly"/>
    <property type="evidence" value="ECO:0007669"/>
    <property type="project" value="UniProtKB-UniRule"/>
</dbReference>
<dbReference type="GO" id="GO:0006412">
    <property type="term" value="P:translation"/>
    <property type="evidence" value="ECO:0007669"/>
    <property type="project" value="InterPro"/>
</dbReference>
<dbReference type="CDD" id="cd07026">
    <property type="entry name" value="Ribosomal_L20"/>
    <property type="match status" value="1"/>
</dbReference>
<dbReference type="FunFam" id="1.10.1900.20:FF:000001">
    <property type="entry name" value="50S ribosomal protein L20"/>
    <property type="match status" value="1"/>
</dbReference>
<dbReference type="Gene3D" id="6.10.160.10">
    <property type="match status" value="1"/>
</dbReference>
<dbReference type="Gene3D" id="1.10.1900.20">
    <property type="entry name" value="Ribosomal protein L20"/>
    <property type="match status" value="1"/>
</dbReference>
<dbReference type="HAMAP" id="MF_00382">
    <property type="entry name" value="Ribosomal_bL20"/>
    <property type="match status" value="1"/>
</dbReference>
<dbReference type="InterPro" id="IPR005813">
    <property type="entry name" value="Ribosomal_bL20"/>
</dbReference>
<dbReference type="InterPro" id="IPR049946">
    <property type="entry name" value="RIBOSOMAL_L20_CS"/>
</dbReference>
<dbReference type="InterPro" id="IPR035566">
    <property type="entry name" value="Ribosomal_protein_bL20_C"/>
</dbReference>
<dbReference type="NCBIfam" id="TIGR01032">
    <property type="entry name" value="rplT_bact"/>
    <property type="match status" value="1"/>
</dbReference>
<dbReference type="PANTHER" id="PTHR10986">
    <property type="entry name" value="39S RIBOSOMAL PROTEIN L20"/>
    <property type="match status" value="1"/>
</dbReference>
<dbReference type="Pfam" id="PF00453">
    <property type="entry name" value="Ribosomal_L20"/>
    <property type="match status" value="1"/>
</dbReference>
<dbReference type="PRINTS" id="PR00062">
    <property type="entry name" value="RIBOSOMALL20"/>
</dbReference>
<dbReference type="SUPFAM" id="SSF74731">
    <property type="entry name" value="Ribosomal protein L20"/>
    <property type="match status" value="1"/>
</dbReference>
<dbReference type="PROSITE" id="PS00937">
    <property type="entry name" value="RIBOSOMAL_L20"/>
    <property type="match status" value="1"/>
</dbReference>
<reference key="1">
    <citation type="journal article" date="2006" name="Nat. Biotechnol.">
        <title>The genome and transcriptomes of the anti-tumor agent Clostridium novyi-NT.</title>
        <authorList>
            <person name="Bettegowda C."/>
            <person name="Huang X."/>
            <person name="Lin J."/>
            <person name="Cheong I."/>
            <person name="Kohli M."/>
            <person name="Szabo S.A."/>
            <person name="Zhang X."/>
            <person name="Diaz L.A. Jr."/>
            <person name="Velculescu V.E."/>
            <person name="Parmigiani G."/>
            <person name="Kinzler K.W."/>
            <person name="Vogelstein B."/>
            <person name="Zhou S."/>
        </authorList>
    </citation>
    <scope>NUCLEOTIDE SEQUENCE [LARGE SCALE GENOMIC DNA]</scope>
    <source>
        <strain>NT</strain>
    </source>
</reference>